<evidence type="ECO:0000255" key="1">
    <source>
        <dbReference type="HAMAP-Rule" id="MF_00262"/>
    </source>
</evidence>
<gene>
    <name evidence="1" type="primary">minE</name>
    <name type="ordered locus">bbp_302</name>
</gene>
<sequence>MALLDFFLSRKKNTANIAKERLQIIVAERRRMDTEPQYLPKLKKEIFQVICKYIKINPEKIKIQLDQTNKNISILELNVTLSE</sequence>
<organism>
    <name type="scientific">Buchnera aphidicola subsp. Baizongia pistaciae (strain Bp)</name>
    <dbReference type="NCBI Taxonomy" id="224915"/>
    <lineage>
        <taxon>Bacteria</taxon>
        <taxon>Pseudomonadati</taxon>
        <taxon>Pseudomonadota</taxon>
        <taxon>Gammaproteobacteria</taxon>
        <taxon>Enterobacterales</taxon>
        <taxon>Erwiniaceae</taxon>
        <taxon>Buchnera</taxon>
    </lineage>
</organism>
<dbReference type="EMBL" id="AE016826">
    <property type="protein sequence ID" value="AAO27027.1"/>
    <property type="molecule type" value="Genomic_DNA"/>
</dbReference>
<dbReference type="RefSeq" id="WP_011091428.1">
    <property type="nucleotide sequence ID" value="NC_004545.1"/>
</dbReference>
<dbReference type="SMR" id="Q89AI4"/>
<dbReference type="STRING" id="224915.bbp_302"/>
<dbReference type="KEGG" id="bab:bbp_302"/>
<dbReference type="eggNOG" id="COG0851">
    <property type="taxonomic scope" value="Bacteria"/>
</dbReference>
<dbReference type="HOGENOM" id="CLU_137929_2_2_6"/>
<dbReference type="OrthoDB" id="9802655at2"/>
<dbReference type="Proteomes" id="UP000000601">
    <property type="component" value="Chromosome"/>
</dbReference>
<dbReference type="GO" id="GO:0051301">
    <property type="term" value="P:cell division"/>
    <property type="evidence" value="ECO:0007669"/>
    <property type="project" value="UniProtKB-KW"/>
</dbReference>
<dbReference type="GO" id="GO:0032955">
    <property type="term" value="P:regulation of division septum assembly"/>
    <property type="evidence" value="ECO:0007669"/>
    <property type="project" value="InterPro"/>
</dbReference>
<dbReference type="FunFam" id="3.30.1070.10:FF:000001">
    <property type="entry name" value="Cell division topological specificity factor"/>
    <property type="match status" value="1"/>
</dbReference>
<dbReference type="Gene3D" id="3.30.1070.10">
    <property type="entry name" value="Cell division topological specificity factor MinE"/>
    <property type="match status" value="1"/>
</dbReference>
<dbReference type="HAMAP" id="MF_00262">
    <property type="entry name" value="MinE"/>
    <property type="match status" value="1"/>
</dbReference>
<dbReference type="InterPro" id="IPR005527">
    <property type="entry name" value="MinE"/>
</dbReference>
<dbReference type="InterPro" id="IPR036707">
    <property type="entry name" value="MinE_sf"/>
</dbReference>
<dbReference type="NCBIfam" id="TIGR01215">
    <property type="entry name" value="minE"/>
    <property type="match status" value="1"/>
</dbReference>
<dbReference type="NCBIfam" id="NF001422">
    <property type="entry name" value="PRK00296.1"/>
    <property type="match status" value="1"/>
</dbReference>
<dbReference type="Pfam" id="PF03776">
    <property type="entry name" value="MinE"/>
    <property type="match status" value="1"/>
</dbReference>
<dbReference type="SUPFAM" id="SSF55229">
    <property type="entry name" value="Cell division protein MinE topological specificity domain"/>
    <property type="match status" value="1"/>
</dbReference>
<proteinExistence type="inferred from homology"/>
<keyword id="KW-0131">Cell cycle</keyword>
<keyword id="KW-0132">Cell division</keyword>
<keyword id="KW-1185">Reference proteome</keyword>
<comment type="function">
    <text evidence="1">Prevents the cell division inhibition by proteins MinC and MinD at internal division sites while permitting inhibition at polar sites. This ensures cell division at the proper site by restricting the formation of a division septum at the midpoint of the long axis of the cell.</text>
</comment>
<comment type="similarity">
    <text evidence="1">Belongs to the MinE family.</text>
</comment>
<protein>
    <recommendedName>
        <fullName evidence="1">Cell division topological specificity factor</fullName>
    </recommendedName>
</protein>
<accession>Q89AI4</accession>
<reference key="1">
    <citation type="journal article" date="2003" name="Proc. Natl. Acad. Sci. U.S.A.">
        <title>Reductive genome evolution in Buchnera aphidicola.</title>
        <authorList>
            <person name="van Ham R.C.H.J."/>
            <person name="Kamerbeek J."/>
            <person name="Palacios C."/>
            <person name="Rausell C."/>
            <person name="Abascal F."/>
            <person name="Bastolla U."/>
            <person name="Fernandez J.M."/>
            <person name="Jimenez L."/>
            <person name="Postigo M."/>
            <person name="Silva F.J."/>
            <person name="Tamames J."/>
            <person name="Viguera E."/>
            <person name="Latorre A."/>
            <person name="Valencia A."/>
            <person name="Moran F."/>
            <person name="Moya A."/>
        </authorList>
    </citation>
    <scope>NUCLEOTIDE SEQUENCE [LARGE SCALE GENOMIC DNA]</scope>
    <source>
        <strain>Bp</strain>
    </source>
</reference>
<feature type="chain" id="PRO_0000205872" description="Cell division topological specificity factor">
    <location>
        <begin position="1"/>
        <end position="83"/>
    </location>
</feature>
<name>MINE_BUCBP</name>